<accession>B5R9A5</accession>
<comment type="function">
    <text evidence="1">With EpmB is involved in the beta-lysylation step of the post-translational modification of translation elongation factor P (EF-P) on 'Lys-34'. Catalyzes the ATP-dependent activation of (R)-beta-lysine produced by EpmB, forming a lysyl-adenylate, from which the beta-lysyl moiety is then transferred to the epsilon-amino group of EF-P 'Lys-34'.</text>
</comment>
<comment type="catalytic activity">
    <reaction evidence="1">
        <text>D-beta-lysine + L-lysyl-[protein] + ATP = N(6)-((3R)-3,6-diaminohexanoyl)-L-lysyl-[protein] + AMP + diphosphate + H(+)</text>
        <dbReference type="Rhea" id="RHEA:83435"/>
        <dbReference type="Rhea" id="RHEA-COMP:9752"/>
        <dbReference type="Rhea" id="RHEA-COMP:20131"/>
        <dbReference type="ChEBI" id="CHEBI:15378"/>
        <dbReference type="ChEBI" id="CHEBI:29969"/>
        <dbReference type="ChEBI" id="CHEBI:30616"/>
        <dbReference type="ChEBI" id="CHEBI:33019"/>
        <dbReference type="ChEBI" id="CHEBI:84138"/>
        <dbReference type="ChEBI" id="CHEBI:156053"/>
        <dbReference type="ChEBI" id="CHEBI:456215"/>
    </reaction>
    <physiologicalReaction direction="left-to-right" evidence="1">
        <dbReference type="Rhea" id="RHEA:83436"/>
    </physiologicalReaction>
</comment>
<comment type="subunit">
    <text evidence="1">Homodimer.</text>
</comment>
<comment type="similarity">
    <text evidence="1">Belongs to the class-II aminoacyl-tRNA synthetase family. EpmA subfamily.</text>
</comment>
<evidence type="ECO:0000255" key="1">
    <source>
        <dbReference type="HAMAP-Rule" id="MF_00174"/>
    </source>
</evidence>
<sequence>MSETATWQPSASIPNLLKRAAIMAEIRRFFADRGVLEVETPCMSQATVTDIHLFPFETRFVGPGHSQGINLYLMTSPEYHMKRLLAAGCGPVFQLCRSFRNEEMGRHHNPEFTMLEWYRPHYDMYRLMNEVDDLLQQVLDCQPAESLSYQQAFQGHLEIDPLSADKTQLREAVAKLDLSNIADTEEDRDTLLQLLLTMGVEPHIGKEKPTFIYHFPASQASLAQISTEDHRVAERFEVYYKGIELANGFHELTDAREQQQRFEQDNRKRAARGLPQQPIDQNLLDALAAGLPDCSGVALGVDRLVMLALGAESLADVIAFTVDRA</sequence>
<protein>
    <recommendedName>
        <fullName evidence="1">Elongation factor P--(R)-beta-lysine ligase</fullName>
        <shortName evidence="1">EF-P--(R)-beta-lysine ligase</shortName>
        <ecNumber evidence="1">6.3.2.-</ecNumber>
    </recommendedName>
    <alternativeName>
        <fullName evidence="1">EF-P post-translational modification enzyme A</fullName>
    </alternativeName>
    <alternativeName>
        <fullName evidence="1">EF-P-lysine lysyltransferase</fullName>
    </alternativeName>
</protein>
<dbReference type="EC" id="6.3.2.-" evidence="1"/>
<dbReference type="EMBL" id="AM933173">
    <property type="protein sequence ID" value="CAR39953.1"/>
    <property type="molecule type" value="Genomic_DNA"/>
</dbReference>
<dbReference type="RefSeq" id="WP_000004791.1">
    <property type="nucleotide sequence ID" value="NC_011274.1"/>
</dbReference>
<dbReference type="SMR" id="B5R9A5"/>
<dbReference type="KEGG" id="seg:SG4187"/>
<dbReference type="HOGENOM" id="CLU_008255_1_1_6"/>
<dbReference type="Proteomes" id="UP000008321">
    <property type="component" value="Chromosome"/>
</dbReference>
<dbReference type="GO" id="GO:0005829">
    <property type="term" value="C:cytosol"/>
    <property type="evidence" value="ECO:0007669"/>
    <property type="project" value="TreeGrafter"/>
</dbReference>
<dbReference type="GO" id="GO:0016880">
    <property type="term" value="F:acid-ammonia (or amide) ligase activity"/>
    <property type="evidence" value="ECO:0007669"/>
    <property type="project" value="UniProtKB-UniRule"/>
</dbReference>
<dbReference type="GO" id="GO:0005524">
    <property type="term" value="F:ATP binding"/>
    <property type="evidence" value="ECO:0007669"/>
    <property type="project" value="UniProtKB-UniRule"/>
</dbReference>
<dbReference type="GO" id="GO:0004824">
    <property type="term" value="F:lysine-tRNA ligase activity"/>
    <property type="evidence" value="ECO:0007669"/>
    <property type="project" value="InterPro"/>
</dbReference>
<dbReference type="GO" id="GO:0000049">
    <property type="term" value="F:tRNA binding"/>
    <property type="evidence" value="ECO:0007669"/>
    <property type="project" value="TreeGrafter"/>
</dbReference>
<dbReference type="GO" id="GO:0006430">
    <property type="term" value="P:lysyl-tRNA aminoacylation"/>
    <property type="evidence" value="ECO:0007669"/>
    <property type="project" value="InterPro"/>
</dbReference>
<dbReference type="FunFam" id="3.30.930.10:FF:000017">
    <property type="entry name" value="Elongation factor P--(R)-beta-lysine ligase"/>
    <property type="match status" value="1"/>
</dbReference>
<dbReference type="Gene3D" id="3.30.930.10">
    <property type="entry name" value="Bira Bifunctional Protein, Domain 2"/>
    <property type="match status" value="1"/>
</dbReference>
<dbReference type="HAMAP" id="MF_00174">
    <property type="entry name" value="EF_P_modif_A"/>
    <property type="match status" value="1"/>
</dbReference>
<dbReference type="InterPro" id="IPR004364">
    <property type="entry name" value="Aa-tRNA-synt_II"/>
</dbReference>
<dbReference type="InterPro" id="IPR006195">
    <property type="entry name" value="aa-tRNA-synth_II"/>
</dbReference>
<dbReference type="InterPro" id="IPR045864">
    <property type="entry name" value="aa-tRNA-synth_II/BPL/LPL"/>
</dbReference>
<dbReference type="InterPro" id="IPR004525">
    <property type="entry name" value="EpmA"/>
</dbReference>
<dbReference type="InterPro" id="IPR018149">
    <property type="entry name" value="Lys-tRNA-synth_II_C"/>
</dbReference>
<dbReference type="NCBIfam" id="TIGR00462">
    <property type="entry name" value="genX"/>
    <property type="match status" value="1"/>
</dbReference>
<dbReference type="NCBIfam" id="NF006828">
    <property type="entry name" value="PRK09350.1"/>
    <property type="match status" value="1"/>
</dbReference>
<dbReference type="PANTHER" id="PTHR42918:SF6">
    <property type="entry name" value="ELONGATION FACTOR P--(R)-BETA-LYSINE LIGASE"/>
    <property type="match status" value="1"/>
</dbReference>
<dbReference type="PANTHER" id="PTHR42918">
    <property type="entry name" value="LYSYL-TRNA SYNTHETASE"/>
    <property type="match status" value="1"/>
</dbReference>
<dbReference type="Pfam" id="PF00152">
    <property type="entry name" value="tRNA-synt_2"/>
    <property type="match status" value="1"/>
</dbReference>
<dbReference type="PRINTS" id="PR00982">
    <property type="entry name" value="TRNASYNTHLYS"/>
</dbReference>
<dbReference type="SUPFAM" id="SSF55681">
    <property type="entry name" value="Class II aaRS and biotin synthetases"/>
    <property type="match status" value="1"/>
</dbReference>
<dbReference type="PROSITE" id="PS50862">
    <property type="entry name" value="AA_TRNA_LIGASE_II"/>
    <property type="match status" value="1"/>
</dbReference>
<keyword id="KW-0067">ATP-binding</keyword>
<keyword id="KW-0436">Ligase</keyword>
<keyword id="KW-0547">Nucleotide-binding</keyword>
<proteinExistence type="inferred from homology"/>
<name>EPMA_SALG2</name>
<gene>
    <name evidence="1" type="primary">epmA</name>
    <name type="synonym">yjeA</name>
    <name type="ordered locus">SG4187</name>
</gene>
<organism>
    <name type="scientific">Salmonella gallinarum (strain 287/91 / NCTC 13346)</name>
    <dbReference type="NCBI Taxonomy" id="550538"/>
    <lineage>
        <taxon>Bacteria</taxon>
        <taxon>Pseudomonadati</taxon>
        <taxon>Pseudomonadota</taxon>
        <taxon>Gammaproteobacteria</taxon>
        <taxon>Enterobacterales</taxon>
        <taxon>Enterobacteriaceae</taxon>
        <taxon>Salmonella</taxon>
    </lineage>
</organism>
<reference key="1">
    <citation type="journal article" date="2008" name="Genome Res.">
        <title>Comparative genome analysis of Salmonella enteritidis PT4 and Salmonella gallinarum 287/91 provides insights into evolutionary and host adaptation pathways.</title>
        <authorList>
            <person name="Thomson N.R."/>
            <person name="Clayton D.J."/>
            <person name="Windhorst D."/>
            <person name="Vernikos G."/>
            <person name="Davidson S."/>
            <person name="Churcher C."/>
            <person name="Quail M.A."/>
            <person name="Stevens M."/>
            <person name="Jones M.A."/>
            <person name="Watson M."/>
            <person name="Barron A."/>
            <person name="Layton A."/>
            <person name="Pickard D."/>
            <person name="Kingsley R.A."/>
            <person name="Bignell A."/>
            <person name="Clark L."/>
            <person name="Harris B."/>
            <person name="Ormond D."/>
            <person name="Abdellah Z."/>
            <person name="Brooks K."/>
            <person name="Cherevach I."/>
            <person name="Chillingworth T."/>
            <person name="Woodward J."/>
            <person name="Norberczak H."/>
            <person name="Lord A."/>
            <person name="Arrowsmith C."/>
            <person name="Jagels K."/>
            <person name="Moule S."/>
            <person name="Mungall K."/>
            <person name="Saunders M."/>
            <person name="Whitehead S."/>
            <person name="Chabalgoity J.A."/>
            <person name="Maskell D."/>
            <person name="Humphreys T."/>
            <person name="Roberts M."/>
            <person name="Barrow P.A."/>
            <person name="Dougan G."/>
            <person name="Parkhill J."/>
        </authorList>
    </citation>
    <scope>NUCLEOTIDE SEQUENCE [LARGE SCALE GENOMIC DNA]</scope>
    <source>
        <strain>287/91 / NCTC 13346</strain>
    </source>
</reference>
<feature type="chain" id="PRO_1000097907" description="Elongation factor P--(R)-beta-lysine ligase">
    <location>
        <begin position="1"/>
        <end position="325"/>
    </location>
</feature>
<feature type="binding site" evidence="1">
    <location>
        <begin position="76"/>
        <end position="78"/>
    </location>
    <ligand>
        <name>substrate</name>
    </ligand>
</feature>
<feature type="binding site" evidence="1">
    <location>
        <begin position="100"/>
        <end position="102"/>
    </location>
    <ligand>
        <name>ATP</name>
        <dbReference type="ChEBI" id="CHEBI:30616"/>
    </ligand>
</feature>
<feature type="binding site" evidence="1">
    <location>
        <position position="109"/>
    </location>
    <ligand>
        <name>ATP</name>
        <dbReference type="ChEBI" id="CHEBI:30616"/>
    </ligand>
</feature>
<feature type="binding site" evidence="1">
    <location>
        <position position="118"/>
    </location>
    <ligand>
        <name>substrate</name>
    </ligand>
</feature>
<feature type="binding site" evidence="1">
    <location>
        <begin position="244"/>
        <end position="245"/>
    </location>
    <ligand>
        <name>ATP</name>
        <dbReference type="ChEBI" id="CHEBI:30616"/>
    </ligand>
</feature>
<feature type="binding site" evidence="1">
    <location>
        <position position="251"/>
    </location>
    <ligand>
        <name>substrate</name>
    </ligand>
</feature>
<feature type="binding site" evidence="1">
    <location>
        <position position="300"/>
    </location>
    <ligand>
        <name>ATP</name>
        <dbReference type="ChEBI" id="CHEBI:30616"/>
    </ligand>
</feature>